<reference key="1">
    <citation type="submission" date="2006-03" db="EMBL/GenBank/DDBJ databases">
        <title>Complete sequence of Methylobacillus flagellatus KT.</title>
        <authorList>
            <consortium name="US DOE Joint Genome Institute"/>
            <person name="Copeland A."/>
            <person name="Lucas S."/>
            <person name="Lapidus A."/>
            <person name="Barry K."/>
            <person name="Detter J.C."/>
            <person name="Glavina del Rio T."/>
            <person name="Hammon N."/>
            <person name="Israni S."/>
            <person name="Dalin E."/>
            <person name="Tice H."/>
            <person name="Pitluck S."/>
            <person name="Brettin T."/>
            <person name="Bruce D."/>
            <person name="Han C."/>
            <person name="Tapia R."/>
            <person name="Saunders E."/>
            <person name="Gilna P."/>
            <person name="Schmutz J."/>
            <person name="Larimer F."/>
            <person name="Land M."/>
            <person name="Kyrpides N."/>
            <person name="Anderson I."/>
            <person name="Richardson P."/>
        </authorList>
    </citation>
    <scope>NUCLEOTIDE SEQUENCE [LARGE SCALE GENOMIC DNA]</scope>
    <source>
        <strain>ATCC 51484 / DSM 6875 / VKM B-1610 / KT</strain>
    </source>
</reference>
<name>RS19_METFK</name>
<comment type="function">
    <text evidence="1">Protein S19 forms a complex with S13 that binds strongly to the 16S ribosomal RNA.</text>
</comment>
<comment type="similarity">
    <text evidence="1">Belongs to the universal ribosomal protein uS19 family.</text>
</comment>
<proteinExistence type="inferred from homology"/>
<evidence type="ECO:0000255" key="1">
    <source>
        <dbReference type="HAMAP-Rule" id="MF_00531"/>
    </source>
</evidence>
<evidence type="ECO:0000305" key="2"/>
<organism>
    <name type="scientific">Methylobacillus flagellatus (strain ATCC 51484 / DSM 6875 / VKM B-1610 / KT)</name>
    <dbReference type="NCBI Taxonomy" id="265072"/>
    <lineage>
        <taxon>Bacteria</taxon>
        <taxon>Pseudomonadati</taxon>
        <taxon>Pseudomonadota</taxon>
        <taxon>Betaproteobacteria</taxon>
        <taxon>Nitrosomonadales</taxon>
        <taxon>Methylophilaceae</taxon>
        <taxon>Methylobacillus</taxon>
    </lineage>
</organism>
<sequence length="91" mass="10096">MARSIKKGPFVDGHLAKKVEAAVASRDRKPIKTWSRRSTILPDFIGLTIAVHNGRQHVPVLISENMVGHKLGEFALTRTFKGHAADKKAKR</sequence>
<gene>
    <name evidence="1" type="primary">rpsS</name>
    <name type="ordered locus">Mfla_0283</name>
</gene>
<dbReference type="EMBL" id="CP000284">
    <property type="protein sequence ID" value="ABE48554.1"/>
    <property type="molecule type" value="Genomic_DNA"/>
</dbReference>
<dbReference type="RefSeq" id="WP_011478651.1">
    <property type="nucleotide sequence ID" value="NC_007947.1"/>
</dbReference>
<dbReference type="SMR" id="Q1H4N3"/>
<dbReference type="STRING" id="265072.Mfla_0283"/>
<dbReference type="KEGG" id="mfa:Mfla_0283"/>
<dbReference type="eggNOG" id="COG0185">
    <property type="taxonomic scope" value="Bacteria"/>
</dbReference>
<dbReference type="HOGENOM" id="CLU_144911_0_1_4"/>
<dbReference type="OrthoDB" id="9797833at2"/>
<dbReference type="Proteomes" id="UP000002440">
    <property type="component" value="Chromosome"/>
</dbReference>
<dbReference type="GO" id="GO:0005737">
    <property type="term" value="C:cytoplasm"/>
    <property type="evidence" value="ECO:0007669"/>
    <property type="project" value="UniProtKB-ARBA"/>
</dbReference>
<dbReference type="GO" id="GO:0015935">
    <property type="term" value="C:small ribosomal subunit"/>
    <property type="evidence" value="ECO:0007669"/>
    <property type="project" value="InterPro"/>
</dbReference>
<dbReference type="GO" id="GO:0019843">
    <property type="term" value="F:rRNA binding"/>
    <property type="evidence" value="ECO:0007669"/>
    <property type="project" value="UniProtKB-UniRule"/>
</dbReference>
<dbReference type="GO" id="GO:0003735">
    <property type="term" value="F:structural constituent of ribosome"/>
    <property type="evidence" value="ECO:0007669"/>
    <property type="project" value="InterPro"/>
</dbReference>
<dbReference type="GO" id="GO:0000028">
    <property type="term" value="P:ribosomal small subunit assembly"/>
    <property type="evidence" value="ECO:0007669"/>
    <property type="project" value="TreeGrafter"/>
</dbReference>
<dbReference type="GO" id="GO:0006412">
    <property type="term" value="P:translation"/>
    <property type="evidence" value="ECO:0007669"/>
    <property type="project" value="UniProtKB-UniRule"/>
</dbReference>
<dbReference type="FunFam" id="3.30.860.10:FF:000001">
    <property type="entry name" value="30S ribosomal protein S19"/>
    <property type="match status" value="1"/>
</dbReference>
<dbReference type="Gene3D" id="3.30.860.10">
    <property type="entry name" value="30s Ribosomal Protein S19, Chain A"/>
    <property type="match status" value="1"/>
</dbReference>
<dbReference type="HAMAP" id="MF_00531">
    <property type="entry name" value="Ribosomal_uS19"/>
    <property type="match status" value="1"/>
</dbReference>
<dbReference type="InterPro" id="IPR002222">
    <property type="entry name" value="Ribosomal_uS19"/>
</dbReference>
<dbReference type="InterPro" id="IPR005732">
    <property type="entry name" value="Ribosomal_uS19_bac-type"/>
</dbReference>
<dbReference type="InterPro" id="IPR020934">
    <property type="entry name" value="Ribosomal_uS19_CS"/>
</dbReference>
<dbReference type="InterPro" id="IPR023575">
    <property type="entry name" value="Ribosomal_uS19_SF"/>
</dbReference>
<dbReference type="NCBIfam" id="TIGR01050">
    <property type="entry name" value="rpsS_bact"/>
    <property type="match status" value="1"/>
</dbReference>
<dbReference type="PANTHER" id="PTHR11880">
    <property type="entry name" value="RIBOSOMAL PROTEIN S19P FAMILY MEMBER"/>
    <property type="match status" value="1"/>
</dbReference>
<dbReference type="PANTHER" id="PTHR11880:SF8">
    <property type="entry name" value="SMALL RIBOSOMAL SUBUNIT PROTEIN US19M"/>
    <property type="match status" value="1"/>
</dbReference>
<dbReference type="Pfam" id="PF00203">
    <property type="entry name" value="Ribosomal_S19"/>
    <property type="match status" value="1"/>
</dbReference>
<dbReference type="PIRSF" id="PIRSF002144">
    <property type="entry name" value="Ribosomal_S19"/>
    <property type="match status" value="1"/>
</dbReference>
<dbReference type="PRINTS" id="PR00975">
    <property type="entry name" value="RIBOSOMALS19"/>
</dbReference>
<dbReference type="SUPFAM" id="SSF54570">
    <property type="entry name" value="Ribosomal protein S19"/>
    <property type="match status" value="1"/>
</dbReference>
<dbReference type="PROSITE" id="PS00323">
    <property type="entry name" value="RIBOSOMAL_S19"/>
    <property type="match status" value="1"/>
</dbReference>
<keyword id="KW-1185">Reference proteome</keyword>
<keyword id="KW-0687">Ribonucleoprotein</keyword>
<keyword id="KW-0689">Ribosomal protein</keyword>
<keyword id="KW-0694">RNA-binding</keyword>
<keyword id="KW-0699">rRNA-binding</keyword>
<accession>Q1H4N3</accession>
<protein>
    <recommendedName>
        <fullName evidence="1">Small ribosomal subunit protein uS19</fullName>
    </recommendedName>
    <alternativeName>
        <fullName evidence="2">30S ribosomal protein S19</fullName>
    </alternativeName>
</protein>
<feature type="chain" id="PRO_0000265381" description="Small ribosomal subunit protein uS19">
    <location>
        <begin position="1"/>
        <end position="91"/>
    </location>
</feature>